<gene>
    <name type="primary">ZNF92</name>
</gene>
<proteinExistence type="evidence at protein level"/>
<organism>
    <name type="scientific">Homo sapiens</name>
    <name type="common">Human</name>
    <dbReference type="NCBI Taxonomy" id="9606"/>
    <lineage>
        <taxon>Eukaryota</taxon>
        <taxon>Metazoa</taxon>
        <taxon>Chordata</taxon>
        <taxon>Craniata</taxon>
        <taxon>Vertebrata</taxon>
        <taxon>Euteleostomi</taxon>
        <taxon>Mammalia</taxon>
        <taxon>Eutheria</taxon>
        <taxon>Euarchontoglires</taxon>
        <taxon>Primates</taxon>
        <taxon>Haplorrhini</taxon>
        <taxon>Catarrhini</taxon>
        <taxon>Hominidae</taxon>
        <taxon>Homo</taxon>
    </lineage>
</organism>
<dbReference type="EMBL" id="AK091618">
    <property type="protein sequence ID" value="BAC03708.1"/>
    <property type="molecule type" value="mRNA"/>
</dbReference>
<dbReference type="EMBL" id="AC092685">
    <property type="status" value="NOT_ANNOTATED_CDS"/>
    <property type="molecule type" value="Genomic_DNA"/>
</dbReference>
<dbReference type="EMBL" id="BC036439">
    <property type="protein sequence ID" value="AAH36439.1"/>
    <property type="molecule type" value="mRNA"/>
</dbReference>
<dbReference type="EMBL" id="BC040594">
    <property type="protein sequence ID" value="AAH40594.1"/>
    <property type="molecule type" value="mRNA"/>
</dbReference>
<dbReference type="EMBL" id="M61872">
    <property type="protein sequence ID" value="AAA58673.1"/>
    <property type="molecule type" value="mRNA"/>
</dbReference>
<dbReference type="CCDS" id="CCDS34646.1">
    <molecule id="Q03936-1"/>
</dbReference>
<dbReference type="CCDS" id="CCDS47596.1">
    <molecule id="Q03936-2"/>
</dbReference>
<dbReference type="CCDS" id="CCDS75608.1">
    <molecule id="Q03936-3"/>
</dbReference>
<dbReference type="PIR" id="G39384">
    <property type="entry name" value="G39384"/>
</dbReference>
<dbReference type="RefSeq" id="NP_001274461.1">
    <molecule id="Q03936-3"/>
    <property type="nucleotide sequence ID" value="NM_001287532.2"/>
</dbReference>
<dbReference type="RefSeq" id="NP_001274462.1">
    <property type="nucleotide sequence ID" value="NM_001287533.1"/>
</dbReference>
<dbReference type="RefSeq" id="NP_001274463.1">
    <property type="nucleotide sequence ID" value="NM_001287534.1"/>
</dbReference>
<dbReference type="RefSeq" id="NP_009070.2">
    <molecule id="Q03936-2"/>
    <property type="nucleotide sequence ID" value="NM_007139.3"/>
</dbReference>
<dbReference type="RefSeq" id="NP_689839.1">
    <molecule id="Q03936-1"/>
    <property type="nucleotide sequence ID" value="NM_152626.4"/>
</dbReference>
<dbReference type="SMR" id="Q03936"/>
<dbReference type="BioGRID" id="127958">
    <property type="interactions" value="58"/>
</dbReference>
<dbReference type="FunCoup" id="Q03936">
    <property type="interactions" value="389"/>
</dbReference>
<dbReference type="IntAct" id="Q03936">
    <property type="interactions" value="54"/>
</dbReference>
<dbReference type="STRING" id="9606.ENSP00000332595"/>
<dbReference type="iPTMnet" id="Q03936"/>
<dbReference type="PhosphoSitePlus" id="Q03936"/>
<dbReference type="BioMuta" id="ZNF92"/>
<dbReference type="DMDM" id="85681871"/>
<dbReference type="jPOST" id="Q03936"/>
<dbReference type="MassIVE" id="Q03936"/>
<dbReference type="PaxDb" id="9606-ENSP00000332595"/>
<dbReference type="PeptideAtlas" id="Q03936"/>
<dbReference type="ProteomicsDB" id="58230">
    <molecule id="Q03936-1"/>
</dbReference>
<dbReference type="ProteomicsDB" id="58231">
    <molecule id="Q03936-2"/>
</dbReference>
<dbReference type="ProteomicsDB" id="58232">
    <molecule id="Q03936-3"/>
</dbReference>
<dbReference type="Antibodypedia" id="14040">
    <property type="antibodies" value="82 antibodies from 17 providers"/>
</dbReference>
<dbReference type="DNASU" id="168374"/>
<dbReference type="Ensembl" id="ENST00000328747.12">
    <molecule id="Q03936-1"/>
    <property type="protein sequence ID" value="ENSP00000332595.8"/>
    <property type="gene ID" value="ENSG00000146757.14"/>
</dbReference>
<dbReference type="Ensembl" id="ENST00000357512.3">
    <molecule id="Q03936-3"/>
    <property type="protein sequence ID" value="ENSP00000350113.2"/>
    <property type="gene ID" value="ENSG00000146757.14"/>
</dbReference>
<dbReference type="Ensembl" id="ENST00000450302.2">
    <molecule id="Q03936-2"/>
    <property type="protein sequence ID" value="ENSP00000396126.2"/>
    <property type="gene ID" value="ENSG00000146757.14"/>
</dbReference>
<dbReference type="GeneID" id="168374"/>
<dbReference type="KEGG" id="hsa:168374"/>
<dbReference type="MANE-Select" id="ENST00000328747.12">
    <property type="protein sequence ID" value="ENSP00000332595.8"/>
    <property type="RefSeq nucleotide sequence ID" value="NM_152626.4"/>
    <property type="RefSeq protein sequence ID" value="NP_689839.1"/>
</dbReference>
<dbReference type="UCSC" id="uc003tua.5">
    <molecule id="Q03936-1"/>
    <property type="organism name" value="human"/>
</dbReference>
<dbReference type="AGR" id="HGNC:13168"/>
<dbReference type="CTD" id="168374"/>
<dbReference type="DisGeNET" id="168374"/>
<dbReference type="GeneCards" id="ZNF92"/>
<dbReference type="HGNC" id="HGNC:13168">
    <property type="gene designation" value="ZNF92"/>
</dbReference>
<dbReference type="HPA" id="ENSG00000146757">
    <property type="expression patterns" value="Low tissue specificity"/>
</dbReference>
<dbReference type="MIM" id="603974">
    <property type="type" value="gene"/>
</dbReference>
<dbReference type="neXtProt" id="NX_Q03936"/>
<dbReference type="OpenTargets" id="ENSG00000146757"/>
<dbReference type="PharmGKB" id="PA37740"/>
<dbReference type="VEuPathDB" id="HostDB:ENSG00000146757"/>
<dbReference type="eggNOG" id="KOG1721">
    <property type="taxonomic scope" value="Eukaryota"/>
</dbReference>
<dbReference type="GeneTree" id="ENSGT01130000278311"/>
<dbReference type="HOGENOM" id="CLU_002678_57_1_1"/>
<dbReference type="InParanoid" id="Q03936"/>
<dbReference type="OMA" id="HEMVDKT"/>
<dbReference type="OrthoDB" id="9507350at2759"/>
<dbReference type="PAN-GO" id="Q03936">
    <property type="GO annotations" value="3 GO annotations based on evolutionary models"/>
</dbReference>
<dbReference type="PhylomeDB" id="Q03936"/>
<dbReference type="TreeFam" id="TF342117"/>
<dbReference type="PathwayCommons" id="Q03936"/>
<dbReference type="Reactome" id="R-HSA-212436">
    <property type="pathway name" value="Generic Transcription Pathway"/>
</dbReference>
<dbReference type="SignaLink" id="Q03936"/>
<dbReference type="BioGRID-ORCS" id="168374">
    <property type="hits" value="8 hits in 1105 CRISPR screens"/>
</dbReference>
<dbReference type="ChiTaRS" id="ZNF92">
    <property type="organism name" value="human"/>
</dbReference>
<dbReference type="GenomeRNAi" id="168374"/>
<dbReference type="Pharos" id="Q03936">
    <property type="development level" value="Tbio"/>
</dbReference>
<dbReference type="PRO" id="PR:Q03936"/>
<dbReference type="Proteomes" id="UP000005640">
    <property type="component" value="Chromosome 7"/>
</dbReference>
<dbReference type="RNAct" id="Q03936">
    <property type="molecule type" value="protein"/>
</dbReference>
<dbReference type="Bgee" id="ENSG00000146757">
    <property type="expression patterns" value="Expressed in endothelial cell and 185 other cell types or tissues"/>
</dbReference>
<dbReference type="ExpressionAtlas" id="Q03936">
    <property type="expression patterns" value="baseline and differential"/>
</dbReference>
<dbReference type="GO" id="GO:0005634">
    <property type="term" value="C:nucleus"/>
    <property type="evidence" value="ECO:0007669"/>
    <property type="project" value="UniProtKB-SubCell"/>
</dbReference>
<dbReference type="GO" id="GO:0003700">
    <property type="term" value="F:DNA-binding transcription factor activity"/>
    <property type="evidence" value="ECO:0000303"/>
    <property type="project" value="UniProtKB"/>
</dbReference>
<dbReference type="GO" id="GO:0000981">
    <property type="term" value="F:DNA-binding transcription factor activity, RNA polymerase II-specific"/>
    <property type="evidence" value="ECO:0000318"/>
    <property type="project" value="GO_Central"/>
</dbReference>
<dbReference type="GO" id="GO:0000978">
    <property type="term" value="F:RNA polymerase II cis-regulatory region sequence-specific DNA binding"/>
    <property type="evidence" value="ECO:0000318"/>
    <property type="project" value="GO_Central"/>
</dbReference>
<dbReference type="GO" id="GO:0008270">
    <property type="term" value="F:zinc ion binding"/>
    <property type="evidence" value="ECO:0000303"/>
    <property type="project" value="UniProtKB"/>
</dbReference>
<dbReference type="GO" id="GO:0006355">
    <property type="term" value="P:regulation of DNA-templated transcription"/>
    <property type="evidence" value="ECO:0000318"/>
    <property type="project" value="GO_Central"/>
</dbReference>
<dbReference type="CDD" id="cd07765">
    <property type="entry name" value="KRAB_A-box"/>
    <property type="match status" value="1"/>
</dbReference>
<dbReference type="FunFam" id="3.30.160.60:FF:001737">
    <property type="entry name" value="Zinc finger protein 100"/>
    <property type="match status" value="2"/>
</dbReference>
<dbReference type="FunFam" id="3.30.160.60:FF:000374">
    <property type="entry name" value="Zinc finger protein 208"/>
    <property type="match status" value="3"/>
</dbReference>
<dbReference type="FunFam" id="3.30.160.60:FF:000120">
    <property type="entry name" value="Zinc finger protein 430"/>
    <property type="match status" value="4"/>
</dbReference>
<dbReference type="FunFam" id="3.30.160.60:FF:002448">
    <property type="entry name" value="Zinc finger protein 430"/>
    <property type="match status" value="1"/>
</dbReference>
<dbReference type="FunFam" id="3.30.160.60:FF:000362">
    <property type="entry name" value="Zinc finger protein 606"/>
    <property type="match status" value="2"/>
</dbReference>
<dbReference type="FunFam" id="3.30.160.60:FF:000176">
    <property type="entry name" value="zinc finger protein 70"/>
    <property type="match status" value="1"/>
</dbReference>
<dbReference type="FunFam" id="3.30.160.60:FF:000307">
    <property type="entry name" value="Zinc finger protein ZFP69 isoform 1"/>
    <property type="match status" value="1"/>
</dbReference>
<dbReference type="Gene3D" id="6.10.140.140">
    <property type="match status" value="1"/>
</dbReference>
<dbReference type="Gene3D" id="3.30.160.60">
    <property type="entry name" value="Classic Zinc Finger"/>
    <property type="match status" value="14"/>
</dbReference>
<dbReference type="InterPro" id="IPR001909">
    <property type="entry name" value="KRAB"/>
</dbReference>
<dbReference type="InterPro" id="IPR036051">
    <property type="entry name" value="KRAB_dom_sf"/>
</dbReference>
<dbReference type="InterPro" id="IPR036236">
    <property type="entry name" value="Znf_C2H2_sf"/>
</dbReference>
<dbReference type="InterPro" id="IPR013087">
    <property type="entry name" value="Znf_C2H2_type"/>
</dbReference>
<dbReference type="PANTHER" id="PTHR24376">
    <property type="entry name" value="ZINC FINGER PROTEIN"/>
    <property type="match status" value="1"/>
</dbReference>
<dbReference type="PANTHER" id="PTHR24376:SF248">
    <property type="entry name" value="ZINC FINGER PROTEIN 493"/>
    <property type="match status" value="1"/>
</dbReference>
<dbReference type="Pfam" id="PF01352">
    <property type="entry name" value="KRAB"/>
    <property type="match status" value="1"/>
</dbReference>
<dbReference type="Pfam" id="PF00096">
    <property type="entry name" value="zf-C2H2"/>
    <property type="match status" value="11"/>
</dbReference>
<dbReference type="SMART" id="SM00349">
    <property type="entry name" value="KRAB"/>
    <property type="match status" value="1"/>
</dbReference>
<dbReference type="SMART" id="SM00355">
    <property type="entry name" value="ZnF_C2H2"/>
    <property type="match status" value="13"/>
</dbReference>
<dbReference type="SUPFAM" id="SSF57667">
    <property type="entry name" value="beta-beta-alpha zinc fingers"/>
    <property type="match status" value="9"/>
</dbReference>
<dbReference type="SUPFAM" id="SSF109640">
    <property type="entry name" value="KRAB domain (Kruppel-associated box)"/>
    <property type="match status" value="1"/>
</dbReference>
<dbReference type="PROSITE" id="PS50805">
    <property type="entry name" value="KRAB"/>
    <property type="match status" value="1"/>
</dbReference>
<dbReference type="PROSITE" id="PS00028">
    <property type="entry name" value="ZINC_FINGER_C2H2_1"/>
    <property type="match status" value="11"/>
</dbReference>
<dbReference type="PROSITE" id="PS50157">
    <property type="entry name" value="ZINC_FINGER_C2H2_2"/>
    <property type="match status" value="14"/>
</dbReference>
<name>ZNF92_HUMAN</name>
<evidence type="ECO:0000255" key="1">
    <source>
        <dbReference type="PROSITE-ProRule" id="PRU00042"/>
    </source>
</evidence>
<evidence type="ECO:0000255" key="2">
    <source>
        <dbReference type="PROSITE-ProRule" id="PRU00119"/>
    </source>
</evidence>
<evidence type="ECO:0000269" key="3">
    <source>
    </source>
</evidence>
<evidence type="ECO:0000303" key="4">
    <source>
    </source>
</evidence>
<evidence type="ECO:0000303" key="5">
    <source>
    </source>
</evidence>
<evidence type="ECO:0000305" key="6"/>
<reference key="1">
    <citation type="journal article" date="2004" name="Nat. Genet.">
        <title>Complete sequencing and characterization of 21,243 full-length human cDNAs.</title>
        <authorList>
            <person name="Ota T."/>
            <person name="Suzuki Y."/>
            <person name="Nishikawa T."/>
            <person name="Otsuki T."/>
            <person name="Sugiyama T."/>
            <person name="Irie R."/>
            <person name="Wakamatsu A."/>
            <person name="Hayashi K."/>
            <person name="Sato H."/>
            <person name="Nagai K."/>
            <person name="Kimura K."/>
            <person name="Makita H."/>
            <person name="Sekine M."/>
            <person name="Obayashi M."/>
            <person name="Nishi T."/>
            <person name="Shibahara T."/>
            <person name="Tanaka T."/>
            <person name="Ishii S."/>
            <person name="Yamamoto J."/>
            <person name="Saito K."/>
            <person name="Kawai Y."/>
            <person name="Isono Y."/>
            <person name="Nakamura Y."/>
            <person name="Nagahari K."/>
            <person name="Murakami K."/>
            <person name="Yasuda T."/>
            <person name="Iwayanagi T."/>
            <person name="Wagatsuma M."/>
            <person name="Shiratori A."/>
            <person name="Sudo H."/>
            <person name="Hosoiri T."/>
            <person name="Kaku Y."/>
            <person name="Kodaira H."/>
            <person name="Kondo H."/>
            <person name="Sugawara M."/>
            <person name="Takahashi M."/>
            <person name="Kanda K."/>
            <person name="Yokoi T."/>
            <person name="Furuya T."/>
            <person name="Kikkawa E."/>
            <person name="Omura Y."/>
            <person name="Abe K."/>
            <person name="Kamihara K."/>
            <person name="Katsuta N."/>
            <person name="Sato K."/>
            <person name="Tanikawa M."/>
            <person name="Yamazaki M."/>
            <person name="Ninomiya K."/>
            <person name="Ishibashi T."/>
            <person name="Yamashita H."/>
            <person name="Murakawa K."/>
            <person name="Fujimori K."/>
            <person name="Tanai H."/>
            <person name="Kimata M."/>
            <person name="Watanabe M."/>
            <person name="Hiraoka S."/>
            <person name="Chiba Y."/>
            <person name="Ishida S."/>
            <person name="Ono Y."/>
            <person name="Takiguchi S."/>
            <person name="Watanabe S."/>
            <person name="Yosida M."/>
            <person name="Hotuta T."/>
            <person name="Kusano J."/>
            <person name="Kanehori K."/>
            <person name="Takahashi-Fujii A."/>
            <person name="Hara H."/>
            <person name="Tanase T.-O."/>
            <person name="Nomura Y."/>
            <person name="Togiya S."/>
            <person name="Komai F."/>
            <person name="Hara R."/>
            <person name="Takeuchi K."/>
            <person name="Arita M."/>
            <person name="Imose N."/>
            <person name="Musashino K."/>
            <person name="Yuuki H."/>
            <person name="Oshima A."/>
            <person name="Sasaki N."/>
            <person name="Aotsuka S."/>
            <person name="Yoshikawa Y."/>
            <person name="Matsunawa H."/>
            <person name="Ichihara T."/>
            <person name="Shiohata N."/>
            <person name="Sano S."/>
            <person name="Moriya S."/>
            <person name="Momiyama H."/>
            <person name="Satoh N."/>
            <person name="Takami S."/>
            <person name="Terashima Y."/>
            <person name="Suzuki O."/>
            <person name="Nakagawa S."/>
            <person name="Senoh A."/>
            <person name="Mizoguchi H."/>
            <person name="Goto Y."/>
            <person name="Shimizu F."/>
            <person name="Wakebe H."/>
            <person name="Hishigaki H."/>
            <person name="Watanabe T."/>
            <person name="Sugiyama A."/>
            <person name="Takemoto M."/>
            <person name="Kawakami B."/>
            <person name="Yamazaki M."/>
            <person name="Watanabe K."/>
            <person name="Kumagai A."/>
            <person name="Itakura S."/>
            <person name="Fukuzumi Y."/>
            <person name="Fujimori Y."/>
            <person name="Komiyama M."/>
            <person name="Tashiro H."/>
            <person name="Tanigami A."/>
            <person name="Fujiwara T."/>
            <person name="Ono T."/>
            <person name="Yamada K."/>
            <person name="Fujii Y."/>
            <person name="Ozaki K."/>
            <person name="Hirao M."/>
            <person name="Ohmori Y."/>
            <person name="Kawabata A."/>
            <person name="Hikiji T."/>
            <person name="Kobatake N."/>
            <person name="Inagaki H."/>
            <person name="Ikema Y."/>
            <person name="Okamoto S."/>
            <person name="Okitani R."/>
            <person name="Kawakami T."/>
            <person name="Noguchi S."/>
            <person name="Itoh T."/>
            <person name="Shigeta K."/>
            <person name="Senba T."/>
            <person name="Matsumura K."/>
            <person name="Nakajima Y."/>
            <person name="Mizuno T."/>
            <person name="Morinaga M."/>
            <person name="Sasaki M."/>
            <person name="Togashi T."/>
            <person name="Oyama M."/>
            <person name="Hata H."/>
            <person name="Watanabe M."/>
            <person name="Komatsu T."/>
            <person name="Mizushima-Sugano J."/>
            <person name="Satoh T."/>
            <person name="Shirai Y."/>
            <person name="Takahashi Y."/>
            <person name="Nakagawa K."/>
            <person name="Okumura K."/>
            <person name="Nagase T."/>
            <person name="Nomura N."/>
            <person name="Kikuchi H."/>
            <person name="Masuho Y."/>
            <person name="Yamashita R."/>
            <person name="Nakai K."/>
            <person name="Yada T."/>
            <person name="Nakamura Y."/>
            <person name="Ohara O."/>
            <person name="Isogai T."/>
            <person name="Sugano S."/>
        </authorList>
    </citation>
    <scope>NUCLEOTIDE SEQUENCE [LARGE SCALE MRNA] (ISOFORM 1)</scope>
    <source>
        <tissue>Brain</tissue>
    </source>
</reference>
<reference key="2">
    <citation type="journal article" date="2003" name="Nature">
        <title>The DNA sequence of human chromosome 7.</title>
        <authorList>
            <person name="Hillier L.W."/>
            <person name="Fulton R.S."/>
            <person name="Fulton L.A."/>
            <person name="Graves T.A."/>
            <person name="Pepin K.H."/>
            <person name="Wagner-McPherson C."/>
            <person name="Layman D."/>
            <person name="Maas J."/>
            <person name="Jaeger S."/>
            <person name="Walker R."/>
            <person name="Wylie K."/>
            <person name="Sekhon M."/>
            <person name="Becker M.C."/>
            <person name="O'Laughlin M.D."/>
            <person name="Schaller M.E."/>
            <person name="Fewell G.A."/>
            <person name="Delehaunty K.D."/>
            <person name="Miner T.L."/>
            <person name="Nash W.E."/>
            <person name="Cordes M."/>
            <person name="Du H."/>
            <person name="Sun H."/>
            <person name="Edwards J."/>
            <person name="Bradshaw-Cordum H."/>
            <person name="Ali J."/>
            <person name="Andrews S."/>
            <person name="Isak A."/>
            <person name="Vanbrunt A."/>
            <person name="Nguyen C."/>
            <person name="Du F."/>
            <person name="Lamar B."/>
            <person name="Courtney L."/>
            <person name="Kalicki J."/>
            <person name="Ozersky P."/>
            <person name="Bielicki L."/>
            <person name="Scott K."/>
            <person name="Holmes A."/>
            <person name="Harkins R."/>
            <person name="Harris A."/>
            <person name="Strong C.M."/>
            <person name="Hou S."/>
            <person name="Tomlinson C."/>
            <person name="Dauphin-Kohlberg S."/>
            <person name="Kozlowicz-Reilly A."/>
            <person name="Leonard S."/>
            <person name="Rohlfing T."/>
            <person name="Rock S.M."/>
            <person name="Tin-Wollam A.-M."/>
            <person name="Abbott A."/>
            <person name="Minx P."/>
            <person name="Maupin R."/>
            <person name="Strowmatt C."/>
            <person name="Latreille P."/>
            <person name="Miller N."/>
            <person name="Johnson D."/>
            <person name="Murray J."/>
            <person name="Woessner J.P."/>
            <person name="Wendl M.C."/>
            <person name="Yang S.-P."/>
            <person name="Schultz B.R."/>
            <person name="Wallis J.W."/>
            <person name="Spieth J."/>
            <person name="Bieri T.A."/>
            <person name="Nelson J.O."/>
            <person name="Berkowicz N."/>
            <person name="Wohldmann P.E."/>
            <person name="Cook L.L."/>
            <person name="Hickenbotham M.T."/>
            <person name="Eldred J."/>
            <person name="Williams D."/>
            <person name="Bedell J.A."/>
            <person name="Mardis E.R."/>
            <person name="Clifton S.W."/>
            <person name="Chissoe S.L."/>
            <person name="Marra M.A."/>
            <person name="Raymond C."/>
            <person name="Haugen E."/>
            <person name="Gillett W."/>
            <person name="Zhou Y."/>
            <person name="James R."/>
            <person name="Phelps K."/>
            <person name="Iadanoto S."/>
            <person name="Bubb K."/>
            <person name="Simms E."/>
            <person name="Levy R."/>
            <person name="Clendenning J."/>
            <person name="Kaul R."/>
            <person name="Kent W.J."/>
            <person name="Furey T.S."/>
            <person name="Baertsch R.A."/>
            <person name="Brent M.R."/>
            <person name="Keibler E."/>
            <person name="Flicek P."/>
            <person name="Bork P."/>
            <person name="Suyama M."/>
            <person name="Bailey J.A."/>
            <person name="Portnoy M.E."/>
            <person name="Torrents D."/>
            <person name="Chinwalla A.T."/>
            <person name="Gish W.R."/>
            <person name="Eddy S.R."/>
            <person name="McPherson J.D."/>
            <person name="Olson M.V."/>
            <person name="Eichler E.E."/>
            <person name="Green E.D."/>
            <person name="Waterston R.H."/>
            <person name="Wilson R.K."/>
        </authorList>
    </citation>
    <scope>NUCLEOTIDE SEQUENCE [LARGE SCALE GENOMIC DNA]</scope>
</reference>
<reference key="3">
    <citation type="journal article" date="2004" name="Genome Res.">
        <title>The status, quality, and expansion of the NIH full-length cDNA project: the Mammalian Gene Collection (MGC).</title>
        <authorList>
            <consortium name="The MGC Project Team"/>
        </authorList>
    </citation>
    <scope>NUCLEOTIDE SEQUENCE [LARGE SCALE MRNA] (ISOFORMS 1 AND 2)</scope>
    <scope>VARIANT ARG-492</scope>
    <source>
        <tissue>Brain</tissue>
        <tissue>Testis</tissue>
    </source>
</reference>
<reference key="4">
    <citation type="journal article" date="1991" name="Proc. Natl. Acad. Sci. U.S.A.">
        <title>The evolutionarily conserved Kruppel-associated box domain defines a subfamily of eukaryotic multifingered proteins.</title>
        <authorList>
            <person name="Bellefroid E.J."/>
            <person name="Poncelet D.A."/>
            <person name="Lecocq P.J."/>
            <person name="Revelant O."/>
            <person name="Martial J.A."/>
        </authorList>
    </citation>
    <scope>NUCLEOTIDE SEQUENCE [MRNA] OF 1-195 (ISOFORM 3)</scope>
</reference>
<sequence>MGPLTFRDVKIEFSLEEWQCLDTAQRNLYRDVMLENYRNLVFLGIAVSKPDLITWLEQGKEPWNLKRHEMVDKTPVMCSHFAQDVWPEHSIKDSFQKVILRTYGKYGHENLQLRKDHKSVDACKVYKGGYNGLNQCLTTTDSKIFQCDKYVKVFHKFPNVNRNKIRHTGKKPFKCKNRGKSFCMLSQLTQHKKIHTREYSYKCEECGKAFNWSSTLTKHKIIHTGEKPYKCEECGKAFNRSSNLTKHKIIHTGEKPYKCEECGKAFNRSSTLTKHKRIHTEEKPYKCEECGKAFNQFSILNKHKRIHMEDKPYKCEECGKAFRVFSILKKHKIIHTGEKPYKCEECGKAFNQFSNLTKHKIIHTGEKPYKCDECGKAFNQSSTLTKHKRIHTGEKPYKCEECGKAFKQSSTLTEHKIIHTGEKPYKCEKCGKAFSWSSAFTKHKRNHMEDKPYKCEECGKAFSVFSTLTKHKIIHTREKPYKCEECGKAFNQSSIFTKHKIIHTEGKSYKCEKCGNAFNQSSNLTARKIIYTGEKPYKYEECDKAFNKFSTLITHQIIYTGEKPCKHECGRAFNKSSNYTKEKLQT</sequence>
<protein>
    <recommendedName>
        <fullName>Zinc finger protein 92</fullName>
    </recommendedName>
    <alternativeName>
        <fullName>Zinc finger protein HTF12</fullName>
    </alternativeName>
</protein>
<comment type="function">
    <text>May be involved in transcriptional regulation.</text>
</comment>
<comment type="interaction">
    <interactant intactId="EBI-12176441">
        <id>Q03936</id>
    </interactant>
    <interactant intactId="EBI-77613">
        <id>P05067</id>
        <label>APP</label>
    </interactant>
    <organismsDiffer>false</organismsDiffer>
    <experiments>4</experiments>
</comment>
<comment type="interaction">
    <interactant intactId="EBI-12176441">
        <id>Q03936</id>
    </interactant>
    <interactant intactId="EBI-16439278">
        <id>Q6FHY5</id>
        <label>MEOX2</label>
    </interactant>
    <organismsDiffer>false</organismsDiffer>
    <experiments>3</experiments>
</comment>
<comment type="subcellular location">
    <subcellularLocation>
        <location evidence="6">Nucleus</location>
    </subcellularLocation>
</comment>
<comment type="alternative products">
    <event type="alternative splicing"/>
    <isoform>
        <id>Q03936-1</id>
        <name>1</name>
        <sequence type="displayed"/>
    </isoform>
    <isoform>
        <id>Q03936-2</id>
        <name>2</name>
        <sequence type="described" ref="VSP_016964"/>
    </isoform>
    <isoform>
        <id>Q03936-3</id>
        <name>3</name>
        <sequence type="described" ref="VSP_016965"/>
    </isoform>
</comment>
<comment type="developmental stage">
    <text>Expressed early during embryonic development.</text>
</comment>
<comment type="similarity">
    <text evidence="6">Belongs to the krueppel C2H2-type zinc-finger protein family.</text>
</comment>
<accession>Q03936</accession>
<accession>A6NNF9</accession>
<accession>Q8N492</accession>
<accession>Q8NB35</accession>
<keyword id="KW-0025">Alternative splicing</keyword>
<keyword id="KW-0238">DNA-binding</keyword>
<keyword id="KW-0479">Metal-binding</keyword>
<keyword id="KW-0539">Nucleus</keyword>
<keyword id="KW-1267">Proteomics identification</keyword>
<keyword id="KW-1185">Reference proteome</keyword>
<keyword id="KW-0677">Repeat</keyword>
<keyword id="KW-0804">Transcription</keyword>
<keyword id="KW-0805">Transcription regulation</keyword>
<keyword id="KW-0862">Zinc</keyword>
<keyword id="KW-0863">Zinc-finger</keyword>
<feature type="chain" id="PRO_0000047401" description="Zinc finger protein 92">
    <location>
        <begin position="1"/>
        <end position="586"/>
    </location>
</feature>
<feature type="domain" description="KRAB" evidence="2">
    <location>
        <begin position="4"/>
        <end position="75"/>
    </location>
</feature>
<feature type="zinc finger region" description="C2H2-type 1; degenerate" evidence="1">
    <location>
        <begin position="145"/>
        <end position="167"/>
    </location>
</feature>
<feature type="zinc finger region" description="C2H2-type 2; degenerate" evidence="1">
    <location>
        <begin position="173"/>
        <end position="195"/>
    </location>
</feature>
<feature type="zinc finger region" description="C2H2-type 3" evidence="1">
    <location>
        <begin position="201"/>
        <end position="223"/>
    </location>
</feature>
<feature type="zinc finger region" description="C2H2-type 4" evidence="1">
    <location>
        <begin position="229"/>
        <end position="251"/>
    </location>
</feature>
<feature type="zinc finger region" description="C2H2-type 5" evidence="1">
    <location>
        <begin position="257"/>
        <end position="279"/>
    </location>
</feature>
<feature type="zinc finger region" description="C2H2-type 6" evidence="1">
    <location>
        <begin position="285"/>
        <end position="307"/>
    </location>
</feature>
<feature type="zinc finger region" description="C2H2-type 7" evidence="1">
    <location>
        <begin position="313"/>
        <end position="335"/>
    </location>
</feature>
<feature type="zinc finger region" description="C2H2-type 8" evidence="1">
    <location>
        <begin position="341"/>
        <end position="363"/>
    </location>
</feature>
<feature type="zinc finger region" description="C2H2-type 9" evidence="1">
    <location>
        <begin position="369"/>
        <end position="391"/>
    </location>
</feature>
<feature type="zinc finger region" description="C2H2-type 10" evidence="1">
    <location>
        <begin position="397"/>
        <end position="419"/>
    </location>
</feature>
<feature type="zinc finger region" description="C2H2-type 11" evidence="1">
    <location>
        <begin position="425"/>
        <end position="447"/>
    </location>
</feature>
<feature type="zinc finger region" description="C2H2-type 12" evidence="1">
    <location>
        <begin position="453"/>
        <end position="475"/>
    </location>
</feature>
<feature type="zinc finger region" description="C2H2-type 13" evidence="1">
    <location>
        <begin position="481"/>
        <end position="503"/>
    </location>
</feature>
<feature type="zinc finger region" description="C2H2-type 14; degenerate" evidence="1">
    <location>
        <begin position="509"/>
        <end position="531"/>
    </location>
</feature>
<feature type="zinc finger region" description="C2H2-type 15; degenerate" evidence="1">
    <location>
        <begin position="537"/>
        <end position="559"/>
    </location>
</feature>
<feature type="zinc finger region" description="C2H2-type 16; degenerate" evidence="1">
    <location>
        <begin position="563"/>
        <end position="586"/>
    </location>
</feature>
<feature type="splice variant" id="VSP_016964" description="In isoform 2." evidence="4">
    <location>
        <begin position="1"/>
        <end position="69"/>
    </location>
</feature>
<feature type="splice variant" id="VSP_016965" description="In isoform 3." evidence="5">
    <location>
        <begin position="44"/>
        <end position="75"/>
    </location>
</feature>
<feature type="sequence variant" id="VAR_052766" description="In dbSNP:rs10265083.">
    <original>A</original>
    <variation>V</variation>
    <location>
        <position position="122"/>
    </location>
</feature>
<feature type="sequence variant" id="VAR_024843" description="In dbSNP:rs17853615." evidence="3">
    <original>Q</original>
    <variation>R</variation>
    <location>
        <position position="492"/>
    </location>
</feature>
<feature type="sequence variant" id="VAR_052767" description="In dbSNP:rs10239197.">
    <original>R</original>
    <variation>H</variation>
    <location>
        <position position="527"/>
    </location>
</feature>
<feature type="sequence conflict" description="In Ref. 4; AAA58673." evidence="6" ref="4">
    <original>QR</original>
    <variation>PG</variation>
    <location>
        <begin position="25"/>
        <end position="26"/>
    </location>
</feature>